<organism>
    <name type="scientific">Borrelia garinii subsp. bavariensis (strain ATCC BAA-2496 / DSM 23469 / PBi)</name>
    <name type="common">Borreliella bavariensis</name>
    <dbReference type="NCBI Taxonomy" id="290434"/>
    <lineage>
        <taxon>Bacteria</taxon>
        <taxon>Pseudomonadati</taxon>
        <taxon>Spirochaetota</taxon>
        <taxon>Spirochaetia</taxon>
        <taxon>Spirochaetales</taxon>
        <taxon>Borreliaceae</taxon>
        <taxon>Borreliella</taxon>
    </lineage>
</organism>
<dbReference type="EC" id="2.7.1.30" evidence="1"/>
<dbReference type="EMBL" id="CP000013">
    <property type="protein sequence ID" value="AAU07098.1"/>
    <property type="molecule type" value="Genomic_DNA"/>
</dbReference>
<dbReference type="RefSeq" id="WP_011193582.1">
    <property type="nucleotide sequence ID" value="NZ_CP028872.1"/>
</dbReference>
<dbReference type="SMR" id="Q662C3"/>
<dbReference type="GeneID" id="45161034"/>
<dbReference type="KEGG" id="bga:BG0244"/>
<dbReference type="eggNOG" id="COG0554">
    <property type="taxonomic scope" value="Bacteria"/>
</dbReference>
<dbReference type="HOGENOM" id="CLU_009281_2_3_12"/>
<dbReference type="OrthoDB" id="9805576at2"/>
<dbReference type="UniPathway" id="UPA00618">
    <property type="reaction ID" value="UER00672"/>
</dbReference>
<dbReference type="Proteomes" id="UP000002276">
    <property type="component" value="Chromosome"/>
</dbReference>
<dbReference type="GO" id="GO:0005829">
    <property type="term" value="C:cytosol"/>
    <property type="evidence" value="ECO:0007669"/>
    <property type="project" value="TreeGrafter"/>
</dbReference>
<dbReference type="GO" id="GO:0005524">
    <property type="term" value="F:ATP binding"/>
    <property type="evidence" value="ECO:0007669"/>
    <property type="project" value="UniProtKB-UniRule"/>
</dbReference>
<dbReference type="GO" id="GO:0004370">
    <property type="term" value="F:glycerol kinase activity"/>
    <property type="evidence" value="ECO:0000250"/>
    <property type="project" value="UniProtKB"/>
</dbReference>
<dbReference type="GO" id="GO:0019563">
    <property type="term" value="P:glycerol catabolic process"/>
    <property type="evidence" value="ECO:0007669"/>
    <property type="project" value="UniProtKB-UniRule"/>
</dbReference>
<dbReference type="GO" id="GO:0006071">
    <property type="term" value="P:glycerol metabolic process"/>
    <property type="evidence" value="ECO:0000250"/>
    <property type="project" value="UniProtKB"/>
</dbReference>
<dbReference type="GO" id="GO:0006072">
    <property type="term" value="P:glycerol-3-phosphate metabolic process"/>
    <property type="evidence" value="ECO:0007669"/>
    <property type="project" value="InterPro"/>
</dbReference>
<dbReference type="CDD" id="cd07786">
    <property type="entry name" value="FGGY_EcGK_like"/>
    <property type="match status" value="1"/>
</dbReference>
<dbReference type="FunFam" id="3.30.420.40:FF:000007">
    <property type="entry name" value="Glycerol kinase"/>
    <property type="match status" value="1"/>
</dbReference>
<dbReference type="FunFam" id="3.30.420.40:FF:000008">
    <property type="entry name" value="Glycerol kinase"/>
    <property type="match status" value="1"/>
</dbReference>
<dbReference type="Gene3D" id="3.30.420.40">
    <property type="match status" value="2"/>
</dbReference>
<dbReference type="HAMAP" id="MF_00186">
    <property type="entry name" value="Glycerol_kin"/>
    <property type="match status" value="1"/>
</dbReference>
<dbReference type="InterPro" id="IPR043129">
    <property type="entry name" value="ATPase_NBD"/>
</dbReference>
<dbReference type="InterPro" id="IPR000577">
    <property type="entry name" value="Carb_kinase_FGGY"/>
</dbReference>
<dbReference type="InterPro" id="IPR018483">
    <property type="entry name" value="Carb_kinase_FGGY_CS"/>
</dbReference>
<dbReference type="InterPro" id="IPR018485">
    <property type="entry name" value="FGGY_C"/>
</dbReference>
<dbReference type="InterPro" id="IPR018484">
    <property type="entry name" value="FGGY_N"/>
</dbReference>
<dbReference type="InterPro" id="IPR005999">
    <property type="entry name" value="Glycerol_kin"/>
</dbReference>
<dbReference type="NCBIfam" id="TIGR01311">
    <property type="entry name" value="glycerol_kin"/>
    <property type="match status" value="1"/>
</dbReference>
<dbReference type="NCBIfam" id="NF000756">
    <property type="entry name" value="PRK00047.1"/>
    <property type="match status" value="1"/>
</dbReference>
<dbReference type="PANTHER" id="PTHR10196:SF69">
    <property type="entry name" value="GLYCEROL KINASE"/>
    <property type="match status" value="1"/>
</dbReference>
<dbReference type="PANTHER" id="PTHR10196">
    <property type="entry name" value="SUGAR KINASE"/>
    <property type="match status" value="1"/>
</dbReference>
<dbReference type="Pfam" id="PF02782">
    <property type="entry name" value="FGGY_C"/>
    <property type="match status" value="1"/>
</dbReference>
<dbReference type="Pfam" id="PF00370">
    <property type="entry name" value="FGGY_N"/>
    <property type="match status" value="1"/>
</dbReference>
<dbReference type="PIRSF" id="PIRSF000538">
    <property type="entry name" value="GlpK"/>
    <property type="match status" value="1"/>
</dbReference>
<dbReference type="SUPFAM" id="SSF53067">
    <property type="entry name" value="Actin-like ATPase domain"/>
    <property type="match status" value="2"/>
</dbReference>
<dbReference type="PROSITE" id="PS00933">
    <property type="entry name" value="FGGY_KINASES_1"/>
    <property type="match status" value="1"/>
</dbReference>
<dbReference type="PROSITE" id="PS00445">
    <property type="entry name" value="FGGY_KINASES_2"/>
    <property type="match status" value="1"/>
</dbReference>
<sequence>MKYILSIDQGTTSSRAIVFDKHANIKGLAQKEFTQIYPQPSWVEHDPTEIWGSQLGVITEALANSRILPNEVDAIGITNQRETTVIWEKSTGKPIYNAIVWQDRRTAKICDQLTKEGKDKIILEKTGLVLDSYFSGTKILWILDNVEGARQKAENGELCFGTIDTWLLWNLTQKKVHATDYSNASRTLLLNIKTLEWDDELLKILNIPKAILPELKESSTIYGETDKSIFGAEIPIAGIAGDQFAATFGQACLKKGMAKNTYGTGCFLTVNIGKEPIINHERLLTSIAWGRKKTVTYVLEGSVFIGGAVIQWLRDGLEFFRKSSDAESLASSASDNGGVYFVPAFVGLGAPHWDSYARGTIIGITRGSTKAHITRAALESIAFQSFDILNTMKKSIPNFEIKELRVDGGASQNNLLMQFQADLLECKVVRPKITETTALGAAYLAGLASGYWQSAEEIISLWQVDKIFEPSMPKNQKEKLLENWNRAIERSKSWIQNSNSL</sequence>
<comment type="function">
    <text evidence="1">Key enzyme in the regulation of glycerol uptake and metabolism. Catalyzes the phosphorylation of glycerol to yield sn-glycerol 3-phosphate.</text>
</comment>
<comment type="catalytic activity">
    <reaction evidence="1">
        <text>glycerol + ATP = sn-glycerol 3-phosphate + ADP + H(+)</text>
        <dbReference type="Rhea" id="RHEA:21644"/>
        <dbReference type="ChEBI" id="CHEBI:15378"/>
        <dbReference type="ChEBI" id="CHEBI:17754"/>
        <dbReference type="ChEBI" id="CHEBI:30616"/>
        <dbReference type="ChEBI" id="CHEBI:57597"/>
        <dbReference type="ChEBI" id="CHEBI:456216"/>
        <dbReference type="EC" id="2.7.1.30"/>
    </reaction>
</comment>
<comment type="activity regulation">
    <text evidence="1">Inhibited by fructose 1,6-bisphosphate (FBP).</text>
</comment>
<comment type="pathway">
    <text evidence="1">Polyol metabolism; glycerol degradation via glycerol kinase pathway; sn-glycerol 3-phosphate from glycerol: step 1/1.</text>
</comment>
<comment type="similarity">
    <text evidence="1">Belongs to the FGGY kinase family.</text>
</comment>
<reference key="1">
    <citation type="journal article" date="2004" name="Nucleic Acids Res.">
        <title>Comparative analysis of the Borrelia garinii genome.</title>
        <authorList>
            <person name="Gloeckner G."/>
            <person name="Lehmann R."/>
            <person name="Romualdi A."/>
            <person name="Pradella S."/>
            <person name="Schulte-Spechtel U."/>
            <person name="Schilhabel M."/>
            <person name="Wilske B."/>
            <person name="Suehnel J."/>
            <person name="Platzer M."/>
        </authorList>
    </citation>
    <scope>NUCLEOTIDE SEQUENCE [LARGE SCALE GENOMIC DNA]</scope>
    <source>
        <strain>ATCC BAA-2496 / DSM 23469 / PBi</strain>
    </source>
</reference>
<protein>
    <recommendedName>
        <fullName evidence="1">Glycerol kinase</fullName>
        <ecNumber evidence="1">2.7.1.30</ecNumber>
    </recommendedName>
    <alternativeName>
        <fullName evidence="1">ATP:glycerol 3-phosphotransferase</fullName>
    </alternativeName>
    <alternativeName>
        <fullName evidence="1">Glycerokinase</fullName>
        <shortName evidence="1">GK</shortName>
    </alternativeName>
</protein>
<feature type="chain" id="PRO_1000020705" description="Glycerol kinase">
    <location>
        <begin position="1"/>
        <end position="501"/>
    </location>
</feature>
<feature type="binding site" evidence="1">
    <location>
        <position position="11"/>
    </location>
    <ligand>
        <name>ADP</name>
        <dbReference type="ChEBI" id="CHEBI:456216"/>
    </ligand>
</feature>
<feature type="binding site" evidence="1">
    <location>
        <position position="11"/>
    </location>
    <ligand>
        <name>ATP</name>
        <dbReference type="ChEBI" id="CHEBI:30616"/>
    </ligand>
</feature>
<feature type="binding site" evidence="1">
    <location>
        <position position="11"/>
    </location>
    <ligand>
        <name>sn-glycerol 3-phosphate</name>
        <dbReference type="ChEBI" id="CHEBI:57597"/>
    </ligand>
</feature>
<feature type="binding site" evidence="1">
    <location>
        <position position="12"/>
    </location>
    <ligand>
        <name>ATP</name>
        <dbReference type="ChEBI" id="CHEBI:30616"/>
    </ligand>
</feature>
<feature type="binding site" evidence="1">
    <location>
        <position position="13"/>
    </location>
    <ligand>
        <name>ATP</name>
        <dbReference type="ChEBI" id="CHEBI:30616"/>
    </ligand>
</feature>
<feature type="binding site" evidence="1">
    <location>
        <position position="15"/>
    </location>
    <ligand>
        <name>ADP</name>
        <dbReference type="ChEBI" id="CHEBI:456216"/>
    </ligand>
</feature>
<feature type="binding site" evidence="1">
    <location>
        <position position="81"/>
    </location>
    <ligand>
        <name>glycerol</name>
        <dbReference type="ChEBI" id="CHEBI:17754"/>
    </ligand>
</feature>
<feature type="binding site" evidence="1">
    <location>
        <position position="81"/>
    </location>
    <ligand>
        <name>sn-glycerol 3-phosphate</name>
        <dbReference type="ChEBI" id="CHEBI:57597"/>
    </ligand>
</feature>
<feature type="binding site" evidence="1">
    <location>
        <position position="82"/>
    </location>
    <ligand>
        <name>glycerol</name>
        <dbReference type="ChEBI" id="CHEBI:17754"/>
    </ligand>
</feature>
<feature type="binding site" evidence="1">
    <location>
        <position position="82"/>
    </location>
    <ligand>
        <name>sn-glycerol 3-phosphate</name>
        <dbReference type="ChEBI" id="CHEBI:57597"/>
    </ligand>
</feature>
<feature type="binding site" evidence="1">
    <location>
        <position position="133"/>
    </location>
    <ligand>
        <name>glycerol</name>
        <dbReference type="ChEBI" id="CHEBI:17754"/>
    </ligand>
</feature>
<feature type="binding site" evidence="1">
    <location>
        <position position="133"/>
    </location>
    <ligand>
        <name>sn-glycerol 3-phosphate</name>
        <dbReference type="ChEBI" id="CHEBI:57597"/>
    </ligand>
</feature>
<feature type="binding site" evidence="1">
    <location>
        <position position="242"/>
    </location>
    <ligand>
        <name>glycerol</name>
        <dbReference type="ChEBI" id="CHEBI:17754"/>
    </ligand>
</feature>
<feature type="binding site" evidence="1">
    <location>
        <position position="242"/>
    </location>
    <ligand>
        <name>sn-glycerol 3-phosphate</name>
        <dbReference type="ChEBI" id="CHEBI:57597"/>
    </ligand>
</feature>
<feature type="binding site" evidence="1">
    <location>
        <position position="243"/>
    </location>
    <ligand>
        <name>glycerol</name>
        <dbReference type="ChEBI" id="CHEBI:17754"/>
    </ligand>
</feature>
<feature type="binding site" evidence="1">
    <location>
        <position position="264"/>
    </location>
    <ligand>
        <name>ADP</name>
        <dbReference type="ChEBI" id="CHEBI:456216"/>
    </ligand>
</feature>
<feature type="binding site" evidence="1">
    <location>
        <position position="264"/>
    </location>
    <ligand>
        <name>ATP</name>
        <dbReference type="ChEBI" id="CHEBI:30616"/>
    </ligand>
</feature>
<feature type="binding site" evidence="1">
    <location>
        <position position="307"/>
    </location>
    <ligand>
        <name>ADP</name>
        <dbReference type="ChEBI" id="CHEBI:456216"/>
    </ligand>
</feature>
<feature type="binding site" evidence="1">
    <location>
        <position position="307"/>
    </location>
    <ligand>
        <name>ATP</name>
        <dbReference type="ChEBI" id="CHEBI:30616"/>
    </ligand>
</feature>
<feature type="binding site" evidence="1">
    <location>
        <position position="311"/>
    </location>
    <ligand>
        <name>ATP</name>
        <dbReference type="ChEBI" id="CHEBI:30616"/>
    </ligand>
</feature>
<feature type="binding site" evidence="1">
    <location>
        <position position="409"/>
    </location>
    <ligand>
        <name>ADP</name>
        <dbReference type="ChEBI" id="CHEBI:456216"/>
    </ligand>
</feature>
<feature type="binding site" evidence="1">
    <location>
        <position position="409"/>
    </location>
    <ligand>
        <name>ATP</name>
        <dbReference type="ChEBI" id="CHEBI:30616"/>
    </ligand>
</feature>
<feature type="binding site" evidence="1">
    <location>
        <position position="413"/>
    </location>
    <ligand>
        <name>ADP</name>
        <dbReference type="ChEBI" id="CHEBI:456216"/>
    </ligand>
</feature>
<evidence type="ECO:0000255" key="1">
    <source>
        <dbReference type="HAMAP-Rule" id="MF_00186"/>
    </source>
</evidence>
<name>GLPK_BORGP</name>
<accession>Q662C3</accession>
<gene>
    <name evidence="1" type="primary">glpK</name>
    <name type="ordered locus">BG0244</name>
</gene>
<proteinExistence type="inferred from homology"/>
<keyword id="KW-0067">ATP-binding</keyword>
<keyword id="KW-0319">Glycerol metabolism</keyword>
<keyword id="KW-0418">Kinase</keyword>
<keyword id="KW-0547">Nucleotide-binding</keyword>
<keyword id="KW-0808">Transferase</keyword>